<accession>P03588</accession>
<reference key="1">
    <citation type="journal article" date="1984" name="J. Mol. Biol.">
        <title>Nucleotide sequence of the brome mosaic virus genome and its implications for viral replication.</title>
        <authorList>
            <person name="Ahlquist P."/>
            <person name="Dasgupta R."/>
            <person name="Kaesberg P."/>
        </authorList>
    </citation>
    <scope>NUCLEOTIDE SEQUENCE [GENOMIC RNA]</scope>
</reference>
<reference key="2">
    <citation type="journal article" date="2009" name="PLoS Pathog.">
        <title>An amphipathic alpha-helix controls multiple roles of brome mosaic virus protein 1a in RNA replication complex assembly and function.</title>
        <authorList>
            <person name="Liu L."/>
            <person name="Westler W.M."/>
            <person name="den Boon J.A."/>
            <person name="Wang X."/>
            <person name="Diaz A."/>
            <person name="Steinberg H.A."/>
            <person name="Ahlquist P."/>
        </authorList>
    </citation>
    <scope>FUNCTION</scope>
    <scope>SUBCELLULAR LOCATION</scope>
    <scope>INTERACTION WITH RNA-DIRECTED RNA POLYMERASE 2A</scope>
    <scope>MUTAGENESIS OF 396-LEU--LEU-407; LEU-400; LYS-403 AND LYS-406</scope>
</reference>
<comment type="function">
    <text evidence="4">Involved in the virus replication. Contains a helicase domain and a methyltransferase domain. The methyltransferase domain is probably involved in viral RNA capping. Involved in the formation of ER membrane spherular invaginations in which RNA replication complexes form.</text>
</comment>
<comment type="subunit">
    <text evidence="4">Interacts with RNA-directed RNA polymerase 2a.</text>
</comment>
<comment type="interaction">
    <interactant intactId="EBI-15874242">
        <id>P03588</id>
    </interactant>
    <interactant intactId="EBI-15874357">
        <id>P03594</id>
        <label>ORF2a</label>
    </interactant>
    <organismsDiffer>false</organismsDiffer>
    <experiments>2</experiments>
</comment>
<comment type="interaction">
    <interactant intactId="EBI-15874242">
        <id>P03588</id>
    </interactant>
    <interactant intactId="EBI-38020">
        <id>Q04947</id>
        <label>RTN1</label>
    </interactant>
    <organismsDiffer>true</organismsDiffer>
    <experiments>4</experiments>
</comment>
<comment type="interaction">
    <interactant intactId="EBI-15874242">
        <id>P03588</id>
    </interactant>
    <interactant intactId="EBI-32591">
        <id>Q12443</id>
        <label>RTN2</label>
    </interactant>
    <organismsDiffer>true</organismsDiffer>
    <experiments>4</experiments>
</comment>
<comment type="interaction">
    <interactant intactId="EBI-15874242">
        <id>P03588</id>
    </interactant>
    <interactant intactId="EBI-37092">
        <id>Q12402</id>
        <label>YOP1</label>
    </interactant>
    <organismsDiffer>true</organismsDiffer>
    <experiments>4</experiments>
</comment>
<comment type="subcellular location">
    <subcellularLocation>
        <location evidence="4">Host endoplasmic reticulum membrane</location>
        <topology evidence="4">Peripheral membrane protein</topology>
    </subcellularLocation>
</comment>
<comment type="similarity">
    <text evidence="5">Belongs to the bromoviridae replication protein 1a family.</text>
</comment>
<organismHost>
    <name type="scientific">Bromus inermis</name>
    <name type="common">Smooth brome grass</name>
    <name type="synonym">Bromopsis inermis</name>
    <dbReference type="NCBI Taxonomy" id="15371"/>
</organismHost>
<sequence length="961" mass="109210">MSSSIDLLKLIAEKGADSQSAQDIVDNQVAQQLSAQIEYAKRSKKINVRNKLSIEEADAFRDRYGGAFDLNLTQQYHAPHSLAGALRVAEHYDCLDSFPPEDPVIDFGGSWWHHFSRRDKRVHSCCPVLGVRDAARHEERMCRMRKILQESDDFDEVPNFCLNRAQDCDVQADWAICIHGGYDMGFQGLCDAMHSHGVRVLRGTVMFDGAMLFDREGFLPLLKCHWQRDGSGADEVIKFDFENESTLSYIHGWQDLGSFFTESVHCIDGTTYLLEREMLKCNIMTYKIIATNLRCPRETLRHCVWFEDISKYVGVSIPEDWSLNRWKCVRVAKTTVREVEEIAFRCFKESKEWTENMKAVASILSAKSSTVIINGQAIMAGERLDIEDYHLVAFALTLNLYQKYEKLTALRDGMEWKGWCHHFKTRFWWGGDSSRAKVGWLRTLASRFPLLRLDSYADSFKFLTRLSNVEEFEQDSVPISRLRTFWTEEDLFDRLEHEVQTAKTKRSKKKAKVPPAAEIPQEEFHDAPESSSPESVSDDVKPVTDVVPDAEVSVEVPTDPRGISRHGAMKEFVRYCKRLHNNSESNLRHLWDISGGRGSEIANKSIFETYHRIDDMVNVHLANGNWLYPKKYDYTVGYNEHGLGPKHADETYIVDKTCACSNLRDIAEASAKVSVPTCDISMVDGVAGCGKTTAIKDAFRMGEDLIVTANRKSAEDVRMALFPDTYNSKVALDVVRTADSAIMHGVPSCHRLLVDEAGLLHYGQLLVVAALSKCSQVLAFGDTEQISFKSRDAGFKLLHGNLQYDRRDVVHKTYRCPQDVIAAVNLLKRKCGNRDTKYQSWTSESKVSRSLTKRRITSGLQVTIDPNRTYLTMTQADKAALQTRAKDFPVSKDWIDGHIKTVHEAQGISVDNVTLVRLKSTKCDLFKHEEYCLVALTRHKKSFEYCFNGELAGDLIFNCVK</sequence>
<dbReference type="EC" id="3.6.4.-"/>
<dbReference type="EC" id="2.1.1.-"/>
<dbReference type="EMBL" id="X02380">
    <property type="protein sequence ID" value="CAA26228.1"/>
    <property type="molecule type" value="Genomic_RNA"/>
</dbReference>
<dbReference type="PIR" id="A04196">
    <property type="entry name" value="P1BVA"/>
</dbReference>
<dbReference type="RefSeq" id="NP_041196.1">
    <property type="nucleotide sequence ID" value="NC_002026.1"/>
</dbReference>
<dbReference type="BMRB" id="P03588"/>
<dbReference type="SMR" id="P03588"/>
<dbReference type="DIP" id="DIP-59378N"/>
<dbReference type="IntAct" id="P03588">
    <property type="interactions" value="4"/>
</dbReference>
<dbReference type="KEGG" id="vg:962143"/>
<dbReference type="OrthoDB" id="1460at10239"/>
<dbReference type="Proteomes" id="UP000001649">
    <property type="component" value="Genome"/>
</dbReference>
<dbReference type="GO" id="GO:0030430">
    <property type="term" value="C:host cell cytoplasm"/>
    <property type="evidence" value="ECO:0000314"/>
    <property type="project" value="UniProtKB"/>
</dbReference>
<dbReference type="GO" id="GO:0044167">
    <property type="term" value="C:host cell endoplasmic reticulum membrane"/>
    <property type="evidence" value="ECO:0007669"/>
    <property type="project" value="UniProtKB-SubCell"/>
</dbReference>
<dbReference type="GO" id="GO:0016020">
    <property type="term" value="C:membrane"/>
    <property type="evidence" value="ECO:0007669"/>
    <property type="project" value="UniProtKB-KW"/>
</dbReference>
<dbReference type="GO" id="GO:0005524">
    <property type="term" value="F:ATP binding"/>
    <property type="evidence" value="ECO:0007669"/>
    <property type="project" value="UniProtKB-KW"/>
</dbReference>
<dbReference type="GO" id="GO:0004386">
    <property type="term" value="F:helicase activity"/>
    <property type="evidence" value="ECO:0007669"/>
    <property type="project" value="UniProtKB-KW"/>
</dbReference>
<dbReference type="GO" id="GO:0016817">
    <property type="term" value="F:hydrolase activity, acting on acid anhydrides"/>
    <property type="evidence" value="ECO:0007669"/>
    <property type="project" value="InterPro"/>
</dbReference>
<dbReference type="GO" id="GO:0008174">
    <property type="term" value="F:mRNA methyltransferase activity"/>
    <property type="evidence" value="ECO:0007669"/>
    <property type="project" value="InterPro"/>
</dbReference>
<dbReference type="GO" id="GO:0003723">
    <property type="term" value="F:RNA binding"/>
    <property type="evidence" value="ECO:0007669"/>
    <property type="project" value="InterPro"/>
</dbReference>
<dbReference type="GO" id="GO:0032259">
    <property type="term" value="P:methylation"/>
    <property type="evidence" value="ECO:0007669"/>
    <property type="project" value="UniProtKB-KW"/>
</dbReference>
<dbReference type="GO" id="GO:0016556">
    <property type="term" value="P:mRNA modification"/>
    <property type="evidence" value="ECO:0007669"/>
    <property type="project" value="InterPro"/>
</dbReference>
<dbReference type="GO" id="GO:0039690">
    <property type="term" value="P:positive stranded viral RNA replication"/>
    <property type="evidence" value="ECO:0000314"/>
    <property type="project" value="UniProtKB"/>
</dbReference>
<dbReference type="GO" id="GO:0006396">
    <property type="term" value="P:RNA processing"/>
    <property type="evidence" value="ECO:0007669"/>
    <property type="project" value="InterPro"/>
</dbReference>
<dbReference type="Gene3D" id="3.40.50.300">
    <property type="entry name" value="P-loop containing nucleotide triphosphate hydrolases"/>
    <property type="match status" value="2"/>
</dbReference>
<dbReference type="InterPro" id="IPR027351">
    <property type="entry name" value="(+)RNA_virus_helicase_core_dom"/>
</dbReference>
<dbReference type="InterPro" id="IPR002588">
    <property type="entry name" value="Alphavirus-like_MT_dom"/>
</dbReference>
<dbReference type="InterPro" id="IPR022184">
    <property type="entry name" value="CMV_1a_C"/>
</dbReference>
<dbReference type="InterPro" id="IPR027417">
    <property type="entry name" value="P-loop_NTPase"/>
</dbReference>
<dbReference type="Pfam" id="PF12503">
    <property type="entry name" value="CMV_1a_C"/>
    <property type="match status" value="1"/>
</dbReference>
<dbReference type="Pfam" id="PF01443">
    <property type="entry name" value="Viral_helicase1"/>
    <property type="match status" value="1"/>
</dbReference>
<dbReference type="Pfam" id="PF01660">
    <property type="entry name" value="Vmethyltransf"/>
    <property type="match status" value="1"/>
</dbReference>
<dbReference type="SUPFAM" id="SSF52540">
    <property type="entry name" value="P-loop containing nucleoside triphosphate hydrolases"/>
    <property type="match status" value="1"/>
</dbReference>
<dbReference type="PROSITE" id="PS51743">
    <property type="entry name" value="ALPHAVIRUS_MT"/>
    <property type="match status" value="1"/>
</dbReference>
<dbReference type="PROSITE" id="PS51657">
    <property type="entry name" value="PSRV_HELICASE"/>
    <property type="match status" value="1"/>
</dbReference>
<organism>
    <name type="scientific">Brome mosaic virus</name>
    <name type="common">BMV</name>
    <dbReference type="NCBI Taxonomy" id="12302"/>
    <lineage>
        <taxon>Viruses</taxon>
        <taxon>Riboviria</taxon>
        <taxon>Orthornavirae</taxon>
        <taxon>Kitrinoviricota</taxon>
        <taxon>Alsuviricetes</taxon>
        <taxon>Martellivirales</taxon>
        <taxon>Bromoviridae</taxon>
        <taxon>Bromovirus</taxon>
    </lineage>
</organism>
<keyword id="KW-0067">ATP-binding</keyword>
<keyword id="KW-0347">Helicase</keyword>
<keyword id="KW-1038">Host endoplasmic reticulum</keyword>
<keyword id="KW-1043">Host membrane</keyword>
<keyword id="KW-0378">Hydrolase</keyword>
<keyword id="KW-0472">Membrane</keyword>
<keyword id="KW-0489">Methyltransferase</keyword>
<keyword id="KW-0547">Nucleotide-binding</keyword>
<keyword id="KW-1185">Reference proteome</keyword>
<keyword id="KW-0808">Transferase</keyword>
<evidence type="ECO:0000255" key="1"/>
<evidence type="ECO:0000255" key="2">
    <source>
        <dbReference type="PROSITE-ProRule" id="PRU01079"/>
    </source>
</evidence>
<evidence type="ECO:0000256" key="3">
    <source>
        <dbReference type="SAM" id="MobiDB-lite"/>
    </source>
</evidence>
<evidence type="ECO:0000269" key="4">
    <source>
    </source>
</evidence>
<evidence type="ECO:0000305" key="5"/>
<protein>
    <recommendedName>
        <fullName>Replication protein 1a</fullName>
    </recommendedName>
    <domain>
        <recommendedName>
            <fullName>ATP-dependent helicase</fullName>
            <ecNumber>3.6.4.-</ecNumber>
        </recommendedName>
    </domain>
    <domain>
        <recommendedName>
            <fullName>Methyltransferase</fullName>
            <ecNumber>2.1.1.-</ecNumber>
        </recommendedName>
    </domain>
</protein>
<name>1A_BMV</name>
<gene>
    <name type="ORF">ORF1a</name>
</gene>
<feature type="chain" id="PRO_0000083256" description="Replication protein 1a">
    <location>
        <begin position="1"/>
        <end position="961"/>
    </location>
</feature>
<feature type="domain" description="Alphavirus-like MT" evidence="2">
    <location>
        <begin position="71"/>
        <end position="260"/>
    </location>
</feature>
<feature type="domain" description="(+)RNA virus helicase ATP-binding">
    <location>
        <begin position="655"/>
        <end position="810"/>
    </location>
</feature>
<feature type="domain" description="(+)RNA virus helicase C-terminal">
    <location>
        <begin position="811"/>
        <end position="961"/>
    </location>
</feature>
<feature type="region of interest" description="Methyltransferase">
    <location>
        <begin position="48"/>
        <end position="380"/>
    </location>
</feature>
<feature type="region of interest" description="Membrane association">
    <location>
        <begin position="392"/>
        <end position="409"/>
    </location>
</feature>
<feature type="region of interest" description="Disordered" evidence="3">
    <location>
        <begin position="503"/>
        <end position="541"/>
    </location>
</feature>
<feature type="region of interest" description="ATP-dependent helicase">
    <location>
        <begin position="682"/>
        <end position="946"/>
    </location>
</feature>
<feature type="compositionally biased region" description="Basic residues" evidence="3">
    <location>
        <begin position="503"/>
        <end position="512"/>
    </location>
</feature>
<feature type="binding site" evidence="1">
    <location>
        <begin position="685"/>
        <end position="692"/>
    </location>
    <ligand>
        <name>ATP</name>
        <dbReference type="ChEBI" id="CHEBI:30616"/>
    </ligand>
</feature>
<feature type="mutagenesis site" description="Complete loss of membrane-rearranging capacity, viral RNA template recruitment, and replication. Increase in 1a mediated 2aPol accumulation." evidence="4">
    <original>LTLNLYQKYEKL</original>
    <variation>ATLNAYQKYEKA</variation>
    <location>
        <begin position="396"/>
        <end position="407"/>
    </location>
</feature>
<feature type="mutagenesis site" description="Reduces 1a membrane association.">
    <original>L</original>
    <variation>A</variation>
    <location>
        <position position="396"/>
    </location>
</feature>
<feature type="mutagenesis site" description="Reduces 1a membrane association." evidence="4">
    <original>L</original>
    <variation>A</variation>
    <location>
        <position position="400"/>
    </location>
</feature>
<feature type="mutagenesis site" description="Slightly reduces 1a membrane association." evidence="4">
    <original>K</original>
    <variation>E</variation>
    <location>
        <position position="403"/>
    </location>
</feature>
<feature type="mutagenesis site" description="No effect on membrane association; 5- to 8-fold increase in the number of 1a-induced membrane invaginations. Enhances viral RNA template recruitment. Complete loss of RNA replication. 50% loss of 1a mediated 2aPol accumulation." evidence="4">
    <original>K</original>
    <variation>R</variation>
    <location>
        <position position="403"/>
    </location>
</feature>
<feature type="mutagenesis site" description="No effect on 1a membrane association." evidence="4">
    <original>K</original>
    <variation>E</variation>
    <location>
        <position position="406"/>
    </location>
</feature>
<proteinExistence type="evidence at protein level"/>